<feature type="chain" id="PRO_0000078158" description="Dipeptidyl carboxypeptidase">
    <location>
        <begin position="1"/>
        <end position="680"/>
    </location>
</feature>
<feature type="active site" evidence="3">
    <location>
        <position position="470"/>
    </location>
</feature>
<feature type="binding site" evidence="3">
    <location>
        <position position="469"/>
    </location>
    <ligand>
        <name>Zn(2+)</name>
        <dbReference type="ChEBI" id="CHEBI:29105"/>
        <note>catalytic</note>
    </ligand>
</feature>
<feature type="binding site" evidence="3">
    <location>
        <position position="473"/>
    </location>
    <ligand>
        <name>Zn(2+)</name>
        <dbReference type="ChEBI" id="CHEBI:29105"/>
        <note>catalytic</note>
    </ligand>
</feature>
<feature type="binding site" evidence="3">
    <location>
        <position position="476"/>
    </location>
    <ligand>
        <name>Zn(2+)</name>
        <dbReference type="ChEBI" id="CHEBI:29105"/>
        <note>catalytic</note>
    </ligand>
</feature>
<comment type="function">
    <text evidence="2">Removes dipeptides from the C-termini of N-blocked tripeptides, tetrapeptides and larger peptides.</text>
</comment>
<comment type="catalytic activity">
    <reaction>
        <text>Hydrolysis of unblocked, C-terminal dipeptides from oligopeptides, with broad specificity. Does not hydrolyze bonds in which P1' is Pro, or both P1 and P1' are Gly.</text>
        <dbReference type="EC" id="3.4.15.5"/>
    </reaction>
</comment>
<comment type="cofactor">
    <cofactor evidence="1">
        <name>Zn(2+)</name>
        <dbReference type="ChEBI" id="CHEBI:29105"/>
    </cofactor>
    <text evidence="1">Binds 1 zinc ion.</text>
</comment>
<comment type="subcellular location">
    <subcellularLocation>
        <location evidence="2">Cytoplasm</location>
    </subcellularLocation>
</comment>
<comment type="disruption phenotype">
    <text evidence="4">Unable to grow on N-acetyl-Ala-Ala-Ala as a nitrogen source.</text>
</comment>
<comment type="similarity">
    <text evidence="5">Belongs to the peptidase M3 family.</text>
</comment>
<dbReference type="EC" id="3.4.15.5"/>
<dbReference type="EMBL" id="M84575">
    <property type="protein sequence ID" value="AAA27055.1"/>
    <property type="molecule type" value="Genomic_DNA"/>
</dbReference>
<dbReference type="EMBL" id="AE006468">
    <property type="protein sequence ID" value="AAL20431.1"/>
    <property type="molecule type" value="Genomic_DNA"/>
</dbReference>
<dbReference type="PIR" id="A42297">
    <property type="entry name" value="A42297"/>
</dbReference>
<dbReference type="RefSeq" id="NP_460472.1">
    <property type="nucleotide sequence ID" value="NC_003197.2"/>
</dbReference>
<dbReference type="RefSeq" id="WP_000106265.1">
    <property type="nucleotide sequence ID" value="NC_003197.2"/>
</dbReference>
<dbReference type="SMR" id="P27236"/>
<dbReference type="STRING" id="99287.STM1512"/>
<dbReference type="MEROPS" id="M03.005"/>
<dbReference type="PaxDb" id="99287-STM1512"/>
<dbReference type="GeneID" id="1253030"/>
<dbReference type="KEGG" id="stm:STM1512"/>
<dbReference type="PATRIC" id="fig|99287.12.peg.1599"/>
<dbReference type="HOGENOM" id="CLU_001805_4_0_6"/>
<dbReference type="OMA" id="EPMLKNR"/>
<dbReference type="PhylomeDB" id="P27236"/>
<dbReference type="BioCyc" id="SENT99287:STM1512-MONOMER"/>
<dbReference type="Proteomes" id="UP000001014">
    <property type="component" value="Chromosome"/>
</dbReference>
<dbReference type="GO" id="GO:0005829">
    <property type="term" value="C:cytosol"/>
    <property type="evidence" value="ECO:0000318"/>
    <property type="project" value="GO_Central"/>
</dbReference>
<dbReference type="GO" id="GO:0004180">
    <property type="term" value="F:carboxypeptidase activity"/>
    <property type="evidence" value="ECO:0000318"/>
    <property type="project" value="GO_Central"/>
</dbReference>
<dbReference type="GO" id="GO:0046872">
    <property type="term" value="F:metal ion binding"/>
    <property type="evidence" value="ECO:0007669"/>
    <property type="project" value="UniProtKB-KW"/>
</dbReference>
<dbReference type="GO" id="GO:0004222">
    <property type="term" value="F:metalloendopeptidase activity"/>
    <property type="evidence" value="ECO:0007669"/>
    <property type="project" value="InterPro"/>
</dbReference>
<dbReference type="GO" id="GO:0008241">
    <property type="term" value="F:peptidyl-dipeptidase activity"/>
    <property type="evidence" value="ECO:0007669"/>
    <property type="project" value="UniProtKB-EC"/>
</dbReference>
<dbReference type="GO" id="GO:0006508">
    <property type="term" value="P:proteolysis"/>
    <property type="evidence" value="ECO:0000318"/>
    <property type="project" value="GO_Central"/>
</dbReference>
<dbReference type="CDD" id="cd06456">
    <property type="entry name" value="M3A_DCP"/>
    <property type="match status" value="1"/>
</dbReference>
<dbReference type="FunFam" id="1.10.1370.40:FF:000001">
    <property type="entry name" value="Dipeptidyl carboxypeptidase II"/>
    <property type="match status" value="2"/>
</dbReference>
<dbReference type="FunFam" id="3.40.390.10:FF:000009">
    <property type="entry name" value="Oligopeptidase A"/>
    <property type="match status" value="1"/>
</dbReference>
<dbReference type="Gene3D" id="1.10.1370.40">
    <property type="match status" value="1"/>
</dbReference>
<dbReference type="Gene3D" id="3.40.390.10">
    <property type="entry name" value="Collagenase (Catalytic Domain)"/>
    <property type="match status" value="1"/>
</dbReference>
<dbReference type="Gene3D" id="1.10.1370.10">
    <property type="entry name" value="Neurolysin, domain 3"/>
    <property type="match status" value="1"/>
</dbReference>
<dbReference type="InterPro" id="IPR034005">
    <property type="entry name" value="M3A_DCP"/>
</dbReference>
<dbReference type="InterPro" id="IPR024079">
    <property type="entry name" value="MetalloPept_cat_dom_sf"/>
</dbReference>
<dbReference type="InterPro" id="IPR024077">
    <property type="entry name" value="Neurolysin/TOP_dom2"/>
</dbReference>
<dbReference type="InterPro" id="IPR045090">
    <property type="entry name" value="Pept_M3A_M3B"/>
</dbReference>
<dbReference type="InterPro" id="IPR001567">
    <property type="entry name" value="Pept_M3A_M3B_dom"/>
</dbReference>
<dbReference type="NCBIfam" id="NF007624">
    <property type="entry name" value="PRK10280.1"/>
    <property type="match status" value="1"/>
</dbReference>
<dbReference type="PANTHER" id="PTHR43660">
    <property type="entry name" value="DIPEPTIDYL CARBOXYPEPTIDASE"/>
    <property type="match status" value="1"/>
</dbReference>
<dbReference type="PANTHER" id="PTHR43660:SF1">
    <property type="entry name" value="DIPEPTIDYL CARBOXYPEPTIDASE"/>
    <property type="match status" value="1"/>
</dbReference>
<dbReference type="Pfam" id="PF01432">
    <property type="entry name" value="Peptidase_M3"/>
    <property type="match status" value="1"/>
</dbReference>
<dbReference type="SUPFAM" id="SSF55486">
    <property type="entry name" value="Metalloproteases ('zincins'), catalytic domain"/>
    <property type="match status" value="1"/>
</dbReference>
<dbReference type="PROSITE" id="PS00142">
    <property type="entry name" value="ZINC_PROTEASE"/>
    <property type="match status" value="1"/>
</dbReference>
<evidence type="ECO:0000250" key="1"/>
<evidence type="ECO:0000250" key="2">
    <source>
        <dbReference type="UniProtKB" id="P24171"/>
    </source>
</evidence>
<evidence type="ECO:0000255" key="3">
    <source>
        <dbReference type="PROSITE-ProRule" id="PRU10095"/>
    </source>
</evidence>
<evidence type="ECO:0000269" key="4">
    <source>
    </source>
</evidence>
<evidence type="ECO:0000305" key="5"/>
<keyword id="KW-0121">Carboxypeptidase</keyword>
<keyword id="KW-0963">Cytoplasm</keyword>
<keyword id="KW-0903">Direct protein sequencing</keyword>
<keyword id="KW-0378">Hydrolase</keyword>
<keyword id="KW-0479">Metal-binding</keyword>
<keyword id="KW-0482">Metalloprotease</keyword>
<keyword id="KW-0645">Protease</keyword>
<keyword id="KW-1185">Reference proteome</keyword>
<keyword id="KW-0862">Zinc</keyword>
<gene>
    <name type="primary">dcp</name>
    <name type="ordered locus">STM1512</name>
</gene>
<reference key="1">
    <citation type="journal article" date="1992" name="J. Bacteriol.">
        <title>Cloning and nucleotide sequence of the Salmonella typhimurium dcp gene encoding dipeptidyl carboxypeptidase.</title>
        <authorList>
            <person name="Miller C.G."/>
            <person name="Hamilton S."/>
        </authorList>
    </citation>
    <scope>NUCLEOTIDE SEQUENCE [GENOMIC DNA]</scope>
    <scope>PROTEIN SEQUENCE OF 1-12</scope>
    <scope>DISRUPTION PHENOTYPE</scope>
    <source>
        <strain>LT2 / SGSC1412 / ATCC 700720</strain>
    </source>
</reference>
<reference key="2">
    <citation type="journal article" date="2001" name="Nature">
        <title>Complete genome sequence of Salmonella enterica serovar Typhimurium LT2.</title>
        <authorList>
            <person name="McClelland M."/>
            <person name="Sanderson K.E."/>
            <person name="Spieth J."/>
            <person name="Clifton S.W."/>
            <person name="Latreille P."/>
            <person name="Courtney L."/>
            <person name="Porwollik S."/>
            <person name="Ali J."/>
            <person name="Dante M."/>
            <person name="Du F."/>
            <person name="Hou S."/>
            <person name="Layman D."/>
            <person name="Leonard S."/>
            <person name="Nguyen C."/>
            <person name="Scott K."/>
            <person name="Holmes A."/>
            <person name="Grewal N."/>
            <person name="Mulvaney E."/>
            <person name="Ryan E."/>
            <person name="Sun H."/>
            <person name="Florea L."/>
            <person name="Miller W."/>
            <person name="Stoneking T."/>
            <person name="Nhan M."/>
            <person name="Waterston R."/>
            <person name="Wilson R.K."/>
        </authorList>
    </citation>
    <scope>NUCLEOTIDE SEQUENCE [LARGE SCALE GENOMIC DNA]</scope>
    <source>
        <strain>LT2 / SGSC1412 / ATCC 700720</strain>
    </source>
</reference>
<accession>P27236</accession>
<proteinExistence type="evidence at protein level"/>
<organism>
    <name type="scientific">Salmonella typhimurium (strain LT2 / SGSC1412 / ATCC 700720)</name>
    <dbReference type="NCBI Taxonomy" id="99287"/>
    <lineage>
        <taxon>Bacteria</taxon>
        <taxon>Pseudomonadati</taxon>
        <taxon>Pseudomonadota</taxon>
        <taxon>Gammaproteobacteria</taxon>
        <taxon>Enterobacterales</taxon>
        <taxon>Enterobacteriaceae</taxon>
        <taxon>Salmonella</taxon>
    </lineage>
</organism>
<protein>
    <recommendedName>
        <fullName>Dipeptidyl carboxypeptidase</fullName>
        <ecNumber>3.4.15.5</ecNumber>
    </recommendedName>
    <alternativeName>
        <fullName>Peptidyl-dipeptidase Dcp</fullName>
    </alternativeName>
</protein>
<sequence length="680" mass="77261">MSTNPLLDQSMLPYQAPRFDRIKDCHYRPAFDEGVRQKRVEIEAIVNHPAAPDFTNTLLALEQSGALLSRVTSVFFAMTAAHTNDELQRLDEAFSAELAALSNDIYLNSALFARVDAVWQQRHSLGLDDESLRLVDVIHQRFVLAGAQLAEEDKARLKVLNTESATLMSQFNQRLLAASKAGGLAVDDAHCLAGLSPEEMTVAAEAAREKGLEERWFIPLLNTTQQPALATLRDRQTRENLFAASWTRAEKGDAHDTRAIVQRLVEIRRCQAKLLGFPNYAAWKMADQMAKTPQAALSFMRGIVPPARQRVLNEQAEIQNVIDGEQGGYTVQAWDWMFYAEQVRREKYALDEAQLKPYFALNTVLQEGVFWTANQLFGITFVERFDIPVYHPDVRVWEIFDSDGVGMALFYGDFFARDSKSGGAWMGNFVEQSTLNETRPVIYNVCNYQKPVDGQPALLLWDDVITLFHEFGHTLHGLFAVQRYATLSGTNTPRDFVEFPSQINEHWASHPRVFERYARHVDSGEKMPADLQERMRKASLFNKGYDMTELLGAALLDMRWHMLEESVAEQSVAEFEQQALAAEHLDLPAVPPRYRSSYFAHIFGGGYAAGYYAYLWTQMLADDGYQWFVEQGGLTRENGQRFRDAILARGNSTDLETLYSAWRGHEPHIDPMLQYRGLDR</sequence>
<name>DCP_SALTY</name>